<organism>
    <name type="scientific">Pseudomonas fluorescens (strain SBW25)</name>
    <dbReference type="NCBI Taxonomy" id="216595"/>
    <lineage>
        <taxon>Bacteria</taxon>
        <taxon>Pseudomonadati</taxon>
        <taxon>Pseudomonadota</taxon>
        <taxon>Gammaproteobacteria</taxon>
        <taxon>Pseudomonadales</taxon>
        <taxon>Pseudomonadaceae</taxon>
        <taxon>Pseudomonas</taxon>
    </lineage>
</organism>
<proteinExistence type="inferred from homology"/>
<accession>C3K2W7</accession>
<evidence type="ECO:0000255" key="1">
    <source>
        <dbReference type="HAMAP-Rule" id="MF_01345"/>
    </source>
</evidence>
<evidence type="ECO:0000305" key="2"/>
<reference key="1">
    <citation type="journal article" date="2009" name="Genome Biol.">
        <title>Genomic and genetic analyses of diversity and plant interactions of Pseudomonas fluorescens.</title>
        <authorList>
            <person name="Silby M.W."/>
            <person name="Cerdeno-Tarraga A.M."/>
            <person name="Vernikos G.S."/>
            <person name="Giddens S.R."/>
            <person name="Jackson R.W."/>
            <person name="Preston G.M."/>
            <person name="Zhang X.-X."/>
            <person name="Moon C.D."/>
            <person name="Gehrig S.M."/>
            <person name="Godfrey S.A.C."/>
            <person name="Knight C.G."/>
            <person name="Malone J.G."/>
            <person name="Robinson Z."/>
            <person name="Spiers A.J."/>
            <person name="Harris S."/>
            <person name="Challis G.L."/>
            <person name="Yaxley A.M."/>
            <person name="Harris D."/>
            <person name="Seeger K."/>
            <person name="Murphy L."/>
            <person name="Rutter S."/>
            <person name="Squares R."/>
            <person name="Quail M.A."/>
            <person name="Saunders E."/>
            <person name="Mavromatis K."/>
            <person name="Brettin T.S."/>
            <person name="Bentley S.D."/>
            <person name="Hothersall J."/>
            <person name="Stephens E."/>
            <person name="Thomas C.M."/>
            <person name="Parkhill J."/>
            <person name="Levy S.B."/>
            <person name="Rainey P.B."/>
            <person name="Thomson N.R."/>
        </authorList>
    </citation>
    <scope>NUCLEOTIDE SEQUENCE [LARGE SCALE GENOMIC DNA]</scope>
    <source>
        <strain>SBW25</strain>
    </source>
</reference>
<sequence>MAEAEKTVRTLTGRVVSDKMDKTITVLIERRVKHPIYGKYVKRSTKLHAHDETNQCHIGDKVTIRETRPLAKTKSWALVDVLERAVEV</sequence>
<feature type="chain" id="PRO_1000214794" description="Small ribosomal subunit protein uS17">
    <location>
        <begin position="1"/>
        <end position="88"/>
    </location>
</feature>
<protein>
    <recommendedName>
        <fullName evidence="1">Small ribosomal subunit protein uS17</fullName>
    </recommendedName>
    <alternativeName>
        <fullName evidence="2">30S ribosomal protein S17</fullName>
    </alternativeName>
</protein>
<dbReference type="EMBL" id="AM181176">
    <property type="protein sequence ID" value="CAY52751.1"/>
    <property type="molecule type" value="Genomic_DNA"/>
</dbReference>
<dbReference type="RefSeq" id="WP_003176419.1">
    <property type="nucleotide sequence ID" value="NC_012660.1"/>
</dbReference>
<dbReference type="SMR" id="C3K2W7"/>
<dbReference type="STRING" id="294.SRM1_05170"/>
<dbReference type="GeneID" id="98113698"/>
<dbReference type="eggNOG" id="COG0186">
    <property type="taxonomic scope" value="Bacteria"/>
</dbReference>
<dbReference type="HOGENOM" id="CLU_073626_1_1_6"/>
<dbReference type="OrthoDB" id="9811714at2"/>
<dbReference type="GO" id="GO:0022627">
    <property type="term" value="C:cytosolic small ribosomal subunit"/>
    <property type="evidence" value="ECO:0007669"/>
    <property type="project" value="TreeGrafter"/>
</dbReference>
<dbReference type="GO" id="GO:0019843">
    <property type="term" value="F:rRNA binding"/>
    <property type="evidence" value="ECO:0007669"/>
    <property type="project" value="UniProtKB-UniRule"/>
</dbReference>
<dbReference type="GO" id="GO:0003735">
    <property type="term" value="F:structural constituent of ribosome"/>
    <property type="evidence" value="ECO:0007669"/>
    <property type="project" value="InterPro"/>
</dbReference>
<dbReference type="GO" id="GO:0006412">
    <property type="term" value="P:translation"/>
    <property type="evidence" value="ECO:0007669"/>
    <property type="project" value="UniProtKB-UniRule"/>
</dbReference>
<dbReference type="CDD" id="cd00364">
    <property type="entry name" value="Ribosomal_uS17"/>
    <property type="match status" value="1"/>
</dbReference>
<dbReference type="FunFam" id="2.40.50.140:FF:000014">
    <property type="entry name" value="30S ribosomal protein S17"/>
    <property type="match status" value="1"/>
</dbReference>
<dbReference type="Gene3D" id="2.40.50.140">
    <property type="entry name" value="Nucleic acid-binding proteins"/>
    <property type="match status" value="1"/>
</dbReference>
<dbReference type="HAMAP" id="MF_01345_B">
    <property type="entry name" value="Ribosomal_uS17_B"/>
    <property type="match status" value="1"/>
</dbReference>
<dbReference type="InterPro" id="IPR012340">
    <property type="entry name" value="NA-bd_OB-fold"/>
</dbReference>
<dbReference type="InterPro" id="IPR000266">
    <property type="entry name" value="Ribosomal_uS17"/>
</dbReference>
<dbReference type="InterPro" id="IPR019984">
    <property type="entry name" value="Ribosomal_uS17_bact/chlr"/>
</dbReference>
<dbReference type="NCBIfam" id="NF004123">
    <property type="entry name" value="PRK05610.1"/>
    <property type="match status" value="1"/>
</dbReference>
<dbReference type="NCBIfam" id="TIGR03635">
    <property type="entry name" value="uS17_bact"/>
    <property type="match status" value="1"/>
</dbReference>
<dbReference type="PANTHER" id="PTHR10744">
    <property type="entry name" value="40S RIBOSOMAL PROTEIN S11 FAMILY MEMBER"/>
    <property type="match status" value="1"/>
</dbReference>
<dbReference type="PANTHER" id="PTHR10744:SF1">
    <property type="entry name" value="SMALL RIBOSOMAL SUBUNIT PROTEIN US17M"/>
    <property type="match status" value="1"/>
</dbReference>
<dbReference type="Pfam" id="PF00366">
    <property type="entry name" value="Ribosomal_S17"/>
    <property type="match status" value="1"/>
</dbReference>
<dbReference type="PRINTS" id="PR00973">
    <property type="entry name" value="RIBOSOMALS17"/>
</dbReference>
<dbReference type="SUPFAM" id="SSF50249">
    <property type="entry name" value="Nucleic acid-binding proteins"/>
    <property type="match status" value="1"/>
</dbReference>
<name>RS17_PSEFS</name>
<keyword id="KW-0687">Ribonucleoprotein</keyword>
<keyword id="KW-0689">Ribosomal protein</keyword>
<keyword id="KW-0694">RNA-binding</keyword>
<keyword id="KW-0699">rRNA-binding</keyword>
<gene>
    <name evidence="1" type="primary">rpsQ</name>
    <name type="ordered locus">PFLU_5518</name>
</gene>
<comment type="function">
    <text evidence="1">One of the primary rRNA binding proteins, it binds specifically to the 5'-end of 16S ribosomal RNA.</text>
</comment>
<comment type="subunit">
    <text evidence="1">Part of the 30S ribosomal subunit.</text>
</comment>
<comment type="similarity">
    <text evidence="1">Belongs to the universal ribosomal protein uS17 family.</text>
</comment>